<gene>
    <name evidence="1" type="primary">atpH</name>
    <name type="ordered locus">plu0043</name>
</gene>
<proteinExistence type="inferred from homology"/>
<evidence type="ECO:0000255" key="1">
    <source>
        <dbReference type="HAMAP-Rule" id="MF_01416"/>
    </source>
</evidence>
<feature type="chain" id="PRO_0000371056" description="ATP synthase subunit delta">
    <location>
        <begin position="1"/>
        <end position="177"/>
    </location>
</feature>
<comment type="function">
    <text evidence="1">F(1)F(0) ATP synthase produces ATP from ADP in the presence of a proton or sodium gradient. F-type ATPases consist of two structural domains, F(1) containing the extramembraneous catalytic core and F(0) containing the membrane proton channel, linked together by a central stalk and a peripheral stalk. During catalysis, ATP synthesis in the catalytic domain of F(1) is coupled via a rotary mechanism of the central stalk subunits to proton translocation.</text>
</comment>
<comment type="function">
    <text evidence="1">This protein is part of the stalk that links CF(0) to CF(1). It either transmits conformational changes from CF(0) to CF(1) or is implicated in proton conduction.</text>
</comment>
<comment type="subunit">
    <text evidence="1">F-type ATPases have 2 components, F(1) - the catalytic core - and F(0) - the membrane proton channel. F(1) has five subunits: alpha(3), beta(3), gamma(1), delta(1), epsilon(1). F(0) has three main subunits: a(1), b(2) and c(10-14). The alpha and beta chains form an alternating ring which encloses part of the gamma chain. F(1) is attached to F(0) by a central stalk formed by the gamma and epsilon chains, while a peripheral stalk is formed by the delta and b chains.</text>
</comment>
<comment type="subcellular location">
    <subcellularLocation>
        <location evidence="1">Cell inner membrane</location>
        <topology evidence="1">Peripheral membrane protein</topology>
    </subcellularLocation>
</comment>
<comment type="similarity">
    <text evidence="1">Belongs to the ATPase delta chain family.</text>
</comment>
<accession>Q7NA91</accession>
<reference key="1">
    <citation type="journal article" date="2003" name="Nat. Biotechnol.">
        <title>The genome sequence of the entomopathogenic bacterium Photorhabdus luminescens.</title>
        <authorList>
            <person name="Duchaud E."/>
            <person name="Rusniok C."/>
            <person name="Frangeul L."/>
            <person name="Buchrieser C."/>
            <person name="Givaudan A."/>
            <person name="Taourit S."/>
            <person name="Bocs S."/>
            <person name="Boursaux-Eude C."/>
            <person name="Chandler M."/>
            <person name="Charles J.-F."/>
            <person name="Dassa E."/>
            <person name="Derose R."/>
            <person name="Derzelle S."/>
            <person name="Freyssinet G."/>
            <person name="Gaudriault S."/>
            <person name="Medigue C."/>
            <person name="Lanois A."/>
            <person name="Powell K."/>
            <person name="Siguier P."/>
            <person name="Vincent R."/>
            <person name="Wingate V."/>
            <person name="Zouine M."/>
            <person name="Glaser P."/>
            <person name="Boemare N."/>
            <person name="Danchin A."/>
            <person name="Kunst F."/>
        </authorList>
    </citation>
    <scope>NUCLEOTIDE SEQUENCE [LARGE SCALE GENOMIC DNA]</scope>
    <source>
        <strain>DSM 15139 / CIP 105565 / TT01</strain>
    </source>
</reference>
<protein>
    <recommendedName>
        <fullName evidence="1">ATP synthase subunit delta</fullName>
    </recommendedName>
    <alternativeName>
        <fullName evidence="1">ATP synthase F(1) sector subunit delta</fullName>
    </alternativeName>
    <alternativeName>
        <fullName evidence="1">F-type ATPase subunit delta</fullName>
        <shortName evidence="1">F-ATPase subunit delta</shortName>
    </alternativeName>
</protein>
<name>ATPD_PHOLL</name>
<organism>
    <name type="scientific">Photorhabdus laumondii subsp. laumondii (strain DSM 15139 / CIP 105565 / TT01)</name>
    <name type="common">Photorhabdus luminescens subsp. laumondii</name>
    <dbReference type="NCBI Taxonomy" id="243265"/>
    <lineage>
        <taxon>Bacteria</taxon>
        <taxon>Pseudomonadati</taxon>
        <taxon>Pseudomonadota</taxon>
        <taxon>Gammaproteobacteria</taxon>
        <taxon>Enterobacterales</taxon>
        <taxon>Morganellaceae</taxon>
        <taxon>Photorhabdus</taxon>
    </lineage>
</organism>
<keyword id="KW-0066">ATP synthesis</keyword>
<keyword id="KW-0997">Cell inner membrane</keyword>
<keyword id="KW-1003">Cell membrane</keyword>
<keyword id="KW-0139">CF(1)</keyword>
<keyword id="KW-0375">Hydrogen ion transport</keyword>
<keyword id="KW-0406">Ion transport</keyword>
<keyword id="KW-0472">Membrane</keyword>
<keyword id="KW-1185">Reference proteome</keyword>
<keyword id="KW-0813">Transport</keyword>
<sequence length="177" mass="19566">MSEFATVARPYAKAAFDFAVEKQSLEQWQNMLAFTAEVTRNEQVGELLSGSLASETLANTFIAICGEQVDEHAQNFIRVMAENGRLLALPEVLQQFIQLRASLESTVDVEVISATELREQQLAKISVAMEKRLSRKVKLNCKIDKSVIAGVVVRAGDLVIDGSIRGRLDRLTDVLQS</sequence>
<dbReference type="EMBL" id="BX571859">
    <property type="protein sequence ID" value="CAE12338.1"/>
    <property type="molecule type" value="Genomic_DNA"/>
</dbReference>
<dbReference type="RefSeq" id="WP_011144456.1">
    <property type="nucleotide sequence ID" value="NC_005126.1"/>
</dbReference>
<dbReference type="SMR" id="Q7NA91"/>
<dbReference type="STRING" id="243265.plu0043"/>
<dbReference type="GeneID" id="48846343"/>
<dbReference type="KEGG" id="plu:plu0043"/>
<dbReference type="eggNOG" id="COG0712">
    <property type="taxonomic scope" value="Bacteria"/>
</dbReference>
<dbReference type="HOGENOM" id="CLU_085114_3_0_6"/>
<dbReference type="OrthoDB" id="9816221at2"/>
<dbReference type="Proteomes" id="UP000002514">
    <property type="component" value="Chromosome"/>
</dbReference>
<dbReference type="GO" id="GO:0005886">
    <property type="term" value="C:plasma membrane"/>
    <property type="evidence" value="ECO:0007669"/>
    <property type="project" value="UniProtKB-SubCell"/>
</dbReference>
<dbReference type="GO" id="GO:0045259">
    <property type="term" value="C:proton-transporting ATP synthase complex"/>
    <property type="evidence" value="ECO:0007669"/>
    <property type="project" value="UniProtKB-KW"/>
</dbReference>
<dbReference type="GO" id="GO:0046933">
    <property type="term" value="F:proton-transporting ATP synthase activity, rotational mechanism"/>
    <property type="evidence" value="ECO:0007669"/>
    <property type="project" value="UniProtKB-UniRule"/>
</dbReference>
<dbReference type="Gene3D" id="1.10.520.20">
    <property type="entry name" value="N-terminal domain of the delta subunit of the F1F0-ATP synthase"/>
    <property type="match status" value="1"/>
</dbReference>
<dbReference type="HAMAP" id="MF_01416">
    <property type="entry name" value="ATP_synth_delta_bact"/>
    <property type="match status" value="1"/>
</dbReference>
<dbReference type="InterPro" id="IPR026015">
    <property type="entry name" value="ATP_synth_OSCP/delta_N_sf"/>
</dbReference>
<dbReference type="InterPro" id="IPR020781">
    <property type="entry name" value="ATPase_OSCP/d_CS"/>
</dbReference>
<dbReference type="InterPro" id="IPR000711">
    <property type="entry name" value="ATPase_OSCP/dsu"/>
</dbReference>
<dbReference type="NCBIfam" id="TIGR01145">
    <property type="entry name" value="ATP_synt_delta"/>
    <property type="match status" value="1"/>
</dbReference>
<dbReference type="NCBIfam" id="NF004402">
    <property type="entry name" value="PRK05758.2-2"/>
    <property type="match status" value="1"/>
</dbReference>
<dbReference type="NCBIfam" id="NF004404">
    <property type="entry name" value="PRK05758.2-5"/>
    <property type="match status" value="1"/>
</dbReference>
<dbReference type="PANTHER" id="PTHR11910">
    <property type="entry name" value="ATP SYNTHASE DELTA CHAIN"/>
    <property type="match status" value="1"/>
</dbReference>
<dbReference type="Pfam" id="PF00213">
    <property type="entry name" value="OSCP"/>
    <property type="match status" value="1"/>
</dbReference>
<dbReference type="PRINTS" id="PR00125">
    <property type="entry name" value="ATPASEDELTA"/>
</dbReference>
<dbReference type="SUPFAM" id="SSF47928">
    <property type="entry name" value="N-terminal domain of the delta subunit of the F1F0-ATP synthase"/>
    <property type="match status" value="1"/>
</dbReference>
<dbReference type="PROSITE" id="PS00389">
    <property type="entry name" value="ATPASE_DELTA"/>
    <property type="match status" value="1"/>
</dbReference>